<evidence type="ECO:0000255" key="1">
    <source>
        <dbReference type="HAMAP-Rule" id="MF_01849"/>
    </source>
</evidence>
<evidence type="ECO:0000255" key="2">
    <source>
        <dbReference type="PROSITE-ProRule" id="PRU01266"/>
    </source>
</evidence>
<sequence length="345" mass="39442">MENILDYNEAELKQWMDKNGEKTFRAKQFFDWIYNGTFDFKDMKNLPQSTRERLEKNFYIGMPSVVKRLNSKKGDTVKFLFRYNDGNIIECVVMKYDYGNSICISTQVGCRMGCSFCASTIGGRVRDLTSGEILAQILKAQKEIGERISNIVLMGSGEPLDNYDNVIKFIRIVNSEKGLNIGQRHITLSTCGIVPRIYDLMKENLQITLAISLHASDDETRKKIMPIANRYSISEIIDCCKKYSDFTGRRITFEYSLVKDVNDDKESAKKLGELLSGMLCHVNLIPVNTVNETSYEKPESSKIKKFCDTLLKYKIESTIRKEMGADINAACGQLRRNYIEESEGK</sequence>
<protein>
    <recommendedName>
        <fullName evidence="1">Probable dual-specificity RNA methyltransferase RlmN</fullName>
        <ecNumber evidence="1">2.1.1.192</ecNumber>
    </recommendedName>
    <alternativeName>
        <fullName evidence="1">23S rRNA (adenine(2503)-C(2))-methyltransferase</fullName>
    </alternativeName>
    <alternativeName>
        <fullName evidence="1">23S rRNA m2A2503 methyltransferase</fullName>
    </alternativeName>
    <alternativeName>
        <fullName evidence="1">Ribosomal RNA large subunit methyltransferase N</fullName>
    </alternativeName>
    <alternativeName>
        <fullName evidence="1">tRNA (adenine(37)-C(2))-methyltransferase</fullName>
    </alternativeName>
    <alternativeName>
        <fullName evidence="1">tRNA m2A37 methyltransferase</fullName>
    </alternativeName>
</protein>
<name>RLMN_CLOAB</name>
<feature type="chain" id="PRO_0000350110" description="Probable dual-specificity RNA methyltransferase RlmN">
    <location>
        <begin position="1"/>
        <end position="345"/>
    </location>
</feature>
<feature type="domain" description="Radical SAM core" evidence="2">
    <location>
        <begin position="96"/>
        <end position="326"/>
    </location>
</feature>
<feature type="active site" description="Proton acceptor" evidence="1">
    <location>
        <position position="90"/>
    </location>
</feature>
<feature type="active site" description="S-methylcysteine intermediate" evidence="1">
    <location>
        <position position="331"/>
    </location>
</feature>
<feature type="binding site" evidence="1">
    <location>
        <position position="110"/>
    </location>
    <ligand>
        <name>[4Fe-4S] cluster</name>
        <dbReference type="ChEBI" id="CHEBI:49883"/>
        <note>4Fe-4S-S-AdoMet</note>
    </ligand>
</feature>
<feature type="binding site" evidence="1">
    <location>
        <position position="114"/>
    </location>
    <ligand>
        <name>[4Fe-4S] cluster</name>
        <dbReference type="ChEBI" id="CHEBI:49883"/>
        <note>4Fe-4S-S-AdoMet</note>
    </ligand>
</feature>
<feature type="binding site" evidence="1">
    <location>
        <position position="117"/>
    </location>
    <ligand>
        <name>[4Fe-4S] cluster</name>
        <dbReference type="ChEBI" id="CHEBI:49883"/>
        <note>4Fe-4S-S-AdoMet</note>
    </ligand>
</feature>
<feature type="binding site" evidence="1">
    <location>
        <begin position="157"/>
        <end position="158"/>
    </location>
    <ligand>
        <name>S-adenosyl-L-methionine</name>
        <dbReference type="ChEBI" id="CHEBI:59789"/>
    </ligand>
</feature>
<feature type="binding site" evidence="1">
    <location>
        <position position="189"/>
    </location>
    <ligand>
        <name>S-adenosyl-L-methionine</name>
        <dbReference type="ChEBI" id="CHEBI:59789"/>
    </ligand>
</feature>
<feature type="binding site" evidence="1">
    <location>
        <begin position="212"/>
        <end position="214"/>
    </location>
    <ligand>
        <name>S-adenosyl-L-methionine</name>
        <dbReference type="ChEBI" id="CHEBI:59789"/>
    </ligand>
</feature>
<feature type="binding site" evidence="1">
    <location>
        <position position="288"/>
    </location>
    <ligand>
        <name>S-adenosyl-L-methionine</name>
        <dbReference type="ChEBI" id="CHEBI:59789"/>
    </ligand>
</feature>
<feature type="disulfide bond" description="(transient)" evidence="1">
    <location>
        <begin position="103"/>
        <end position="331"/>
    </location>
</feature>
<accession>Q97IC4</accession>
<keyword id="KW-0004">4Fe-4S</keyword>
<keyword id="KW-0963">Cytoplasm</keyword>
<keyword id="KW-1015">Disulfide bond</keyword>
<keyword id="KW-0408">Iron</keyword>
<keyword id="KW-0411">Iron-sulfur</keyword>
<keyword id="KW-0479">Metal-binding</keyword>
<keyword id="KW-0489">Methyltransferase</keyword>
<keyword id="KW-1185">Reference proteome</keyword>
<keyword id="KW-0698">rRNA processing</keyword>
<keyword id="KW-0949">S-adenosyl-L-methionine</keyword>
<keyword id="KW-0808">Transferase</keyword>
<keyword id="KW-0819">tRNA processing</keyword>
<proteinExistence type="inferred from homology"/>
<organism>
    <name type="scientific">Clostridium acetobutylicum (strain ATCC 824 / DSM 792 / JCM 1419 / IAM 19013 / LMG 5710 / NBRC 13948 / NRRL B-527 / VKM B-1787 / 2291 / W)</name>
    <dbReference type="NCBI Taxonomy" id="272562"/>
    <lineage>
        <taxon>Bacteria</taxon>
        <taxon>Bacillati</taxon>
        <taxon>Bacillota</taxon>
        <taxon>Clostridia</taxon>
        <taxon>Eubacteriales</taxon>
        <taxon>Clostridiaceae</taxon>
        <taxon>Clostridium</taxon>
    </lineage>
</organism>
<reference key="1">
    <citation type="journal article" date="2001" name="J. Bacteriol.">
        <title>Genome sequence and comparative analysis of the solvent-producing bacterium Clostridium acetobutylicum.</title>
        <authorList>
            <person name="Noelling J."/>
            <person name="Breton G."/>
            <person name="Omelchenko M.V."/>
            <person name="Makarova K.S."/>
            <person name="Zeng Q."/>
            <person name="Gibson R."/>
            <person name="Lee H.M."/>
            <person name="Dubois J."/>
            <person name="Qiu D."/>
            <person name="Hitti J."/>
            <person name="Wolf Y.I."/>
            <person name="Tatusov R.L."/>
            <person name="Sabathe F."/>
            <person name="Doucette-Stamm L.A."/>
            <person name="Soucaille P."/>
            <person name="Daly M.J."/>
            <person name="Bennett G.N."/>
            <person name="Koonin E.V."/>
            <person name="Smith D.R."/>
        </authorList>
    </citation>
    <scope>NUCLEOTIDE SEQUENCE [LARGE SCALE GENOMIC DNA]</scope>
    <source>
        <strain>ATCC 824 / DSM 792 / JCM 1419 / IAM 19013 / LMG 5710 / NBRC 13948 / NRRL B-527 / VKM B-1787 / 2291 / W</strain>
    </source>
</reference>
<dbReference type="EC" id="2.1.1.192" evidence="1"/>
<dbReference type="EMBL" id="AE001437">
    <property type="protein sequence ID" value="AAK79692.1"/>
    <property type="molecule type" value="Genomic_DNA"/>
</dbReference>
<dbReference type="PIR" id="A97113">
    <property type="entry name" value="A97113"/>
</dbReference>
<dbReference type="RefSeq" id="NP_348352.1">
    <property type="nucleotide sequence ID" value="NC_003030.1"/>
</dbReference>
<dbReference type="RefSeq" id="WP_010965033.1">
    <property type="nucleotide sequence ID" value="NC_003030.1"/>
</dbReference>
<dbReference type="SMR" id="Q97IC4"/>
<dbReference type="STRING" id="272562.CA_C1726"/>
<dbReference type="GeneID" id="44998221"/>
<dbReference type="KEGG" id="cac:CA_C1726"/>
<dbReference type="PATRIC" id="fig|272562.8.peg.1928"/>
<dbReference type="eggNOG" id="COG0820">
    <property type="taxonomic scope" value="Bacteria"/>
</dbReference>
<dbReference type="HOGENOM" id="CLU_029101_2_0_9"/>
<dbReference type="OrthoDB" id="9793973at2"/>
<dbReference type="Proteomes" id="UP000000814">
    <property type="component" value="Chromosome"/>
</dbReference>
<dbReference type="GO" id="GO:0005737">
    <property type="term" value="C:cytoplasm"/>
    <property type="evidence" value="ECO:0007669"/>
    <property type="project" value="UniProtKB-SubCell"/>
</dbReference>
<dbReference type="GO" id="GO:0051539">
    <property type="term" value="F:4 iron, 4 sulfur cluster binding"/>
    <property type="evidence" value="ECO:0007669"/>
    <property type="project" value="UniProtKB-UniRule"/>
</dbReference>
<dbReference type="GO" id="GO:0046872">
    <property type="term" value="F:metal ion binding"/>
    <property type="evidence" value="ECO:0007669"/>
    <property type="project" value="UniProtKB-KW"/>
</dbReference>
<dbReference type="GO" id="GO:0070040">
    <property type="term" value="F:rRNA (adenine(2503)-C2-)-methyltransferase activity"/>
    <property type="evidence" value="ECO:0007669"/>
    <property type="project" value="UniProtKB-UniRule"/>
</dbReference>
<dbReference type="GO" id="GO:0019843">
    <property type="term" value="F:rRNA binding"/>
    <property type="evidence" value="ECO:0007669"/>
    <property type="project" value="UniProtKB-UniRule"/>
</dbReference>
<dbReference type="GO" id="GO:0002935">
    <property type="term" value="F:tRNA (adenine(37)-C2)-methyltransferase activity"/>
    <property type="evidence" value="ECO:0007669"/>
    <property type="project" value="UniProtKB-UniRule"/>
</dbReference>
<dbReference type="GO" id="GO:0000049">
    <property type="term" value="F:tRNA binding"/>
    <property type="evidence" value="ECO:0007669"/>
    <property type="project" value="UniProtKB-UniRule"/>
</dbReference>
<dbReference type="GO" id="GO:0070475">
    <property type="term" value="P:rRNA base methylation"/>
    <property type="evidence" value="ECO:0007669"/>
    <property type="project" value="UniProtKB-UniRule"/>
</dbReference>
<dbReference type="GO" id="GO:0030488">
    <property type="term" value="P:tRNA methylation"/>
    <property type="evidence" value="ECO:0007669"/>
    <property type="project" value="UniProtKB-UniRule"/>
</dbReference>
<dbReference type="CDD" id="cd01335">
    <property type="entry name" value="Radical_SAM"/>
    <property type="match status" value="1"/>
</dbReference>
<dbReference type="FunFam" id="3.20.20.70:FF:000014">
    <property type="entry name" value="Probable dual-specificity RNA methyltransferase RlmN"/>
    <property type="match status" value="1"/>
</dbReference>
<dbReference type="Gene3D" id="1.10.150.530">
    <property type="match status" value="1"/>
</dbReference>
<dbReference type="Gene3D" id="3.20.20.70">
    <property type="entry name" value="Aldolase class I"/>
    <property type="match status" value="1"/>
</dbReference>
<dbReference type="HAMAP" id="MF_01849">
    <property type="entry name" value="RNA_methyltr_RlmN"/>
    <property type="match status" value="1"/>
</dbReference>
<dbReference type="InterPro" id="IPR013785">
    <property type="entry name" value="Aldolase_TIM"/>
</dbReference>
<dbReference type="InterPro" id="IPR006638">
    <property type="entry name" value="Elp3/MiaA/NifB-like_rSAM"/>
</dbReference>
<dbReference type="InterPro" id="IPR040072">
    <property type="entry name" value="Methyltransferase_A"/>
</dbReference>
<dbReference type="InterPro" id="IPR048641">
    <property type="entry name" value="RlmN_N"/>
</dbReference>
<dbReference type="InterPro" id="IPR027492">
    <property type="entry name" value="RNA_MTrfase_RlmN"/>
</dbReference>
<dbReference type="InterPro" id="IPR004383">
    <property type="entry name" value="rRNA_lsu_MTrfase_RlmN/Cfr"/>
</dbReference>
<dbReference type="InterPro" id="IPR007197">
    <property type="entry name" value="rSAM"/>
</dbReference>
<dbReference type="NCBIfam" id="TIGR00048">
    <property type="entry name" value="rRNA_mod_RlmN"/>
    <property type="match status" value="1"/>
</dbReference>
<dbReference type="PANTHER" id="PTHR30544">
    <property type="entry name" value="23S RRNA METHYLTRANSFERASE"/>
    <property type="match status" value="1"/>
</dbReference>
<dbReference type="PANTHER" id="PTHR30544:SF5">
    <property type="entry name" value="RADICAL SAM CORE DOMAIN-CONTAINING PROTEIN"/>
    <property type="match status" value="1"/>
</dbReference>
<dbReference type="Pfam" id="PF04055">
    <property type="entry name" value="Radical_SAM"/>
    <property type="match status" value="1"/>
</dbReference>
<dbReference type="Pfam" id="PF21016">
    <property type="entry name" value="RlmN_N"/>
    <property type="match status" value="1"/>
</dbReference>
<dbReference type="PIRSF" id="PIRSF006004">
    <property type="entry name" value="CHP00048"/>
    <property type="match status" value="1"/>
</dbReference>
<dbReference type="SFLD" id="SFLDF00275">
    <property type="entry name" value="adenosine_C2_methyltransferase"/>
    <property type="match status" value="1"/>
</dbReference>
<dbReference type="SFLD" id="SFLDS00029">
    <property type="entry name" value="Radical_SAM"/>
    <property type="match status" value="1"/>
</dbReference>
<dbReference type="SMART" id="SM00729">
    <property type="entry name" value="Elp3"/>
    <property type="match status" value="1"/>
</dbReference>
<dbReference type="SUPFAM" id="SSF102114">
    <property type="entry name" value="Radical SAM enzymes"/>
    <property type="match status" value="1"/>
</dbReference>
<dbReference type="PROSITE" id="PS51918">
    <property type="entry name" value="RADICAL_SAM"/>
    <property type="match status" value="1"/>
</dbReference>
<gene>
    <name evidence="1" type="primary">rlmN</name>
    <name type="ordered locus">CA_C1726</name>
</gene>
<comment type="function">
    <text evidence="1">Specifically methylates position 2 of adenine 2503 in 23S rRNA and position 2 of adenine 37 in tRNAs.</text>
</comment>
<comment type="catalytic activity">
    <reaction evidence="1">
        <text>adenosine(2503) in 23S rRNA + 2 reduced [2Fe-2S]-[ferredoxin] + 2 S-adenosyl-L-methionine = 2-methyladenosine(2503) in 23S rRNA + 5'-deoxyadenosine + L-methionine + 2 oxidized [2Fe-2S]-[ferredoxin] + S-adenosyl-L-homocysteine</text>
        <dbReference type="Rhea" id="RHEA:42916"/>
        <dbReference type="Rhea" id="RHEA-COMP:10000"/>
        <dbReference type="Rhea" id="RHEA-COMP:10001"/>
        <dbReference type="Rhea" id="RHEA-COMP:10152"/>
        <dbReference type="Rhea" id="RHEA-COMP:10282"/>
        <dbReference type="ChEBI" id="CHEBI:17319"/>
        <dbReference type="ChEBI" id="CHEBI:33737"/>
        <dbReference type="ChEBI" id="CHEBI:33738"/>
        <dbReference type="ChEBI" id="CHEBI:57844"/>
        <dbReference type="ChEBI" id="CHEBI:57856"/>
        <dbReference type="ChEBI" id="CHEBI:59789"/>
        <dbReference type="ChEBI" id="CHEBI:74411"/>
        <dbReference type="ChEBI" id="CHEBI:74497"/>
        <dbReference type="EC" id="2.1.1.192"/>
    </reaction>
</comment>
<comment type="catalytic activity">
    <reaction evidence="1">
        <text>adenosine(37) in tRNA + 2 reduced [2Fe-2S]-[ferredoxin] + 2 S-adenosyl-L-methionine = 2-methyladenosine(37) in tRNA + 5'-deoxyadenosine + L-methionine + 2 oxidized [2Fe-2S]-[ferredoxin] + S-adenosyl-L-homocysteine</text>
        <dbReference type="Rhea" id="RHEA:43332"/>
        <dbReference type="Rhea" id="RHEA-COMP:10000"/>
        <dbReference type="Rhea" id="RHEA-COMP:10001"/>
        <dbReference type="Rhea" id="RHEA-COMP:10162"/>
        <dbReference type="Rhea" id="RHEA-COMP:10485"/>
        <dbReference type="ChEBI" id="CHEBI:17319"/>
        <dbReference type="ChEBI" id="CHEBI:33737"/>
        <dbReference type="ChEBI" id="CHEBI:33738"/>
        <dbReference type="ChEBI" id="CHEBI:57844"/>
        <dbReference type="ChEBI" id="CHEBI:57856"/>
        <dbReference type="ChEBI" id="CHEBI:59789"/>
        <dbReference type="ChEBI" id="CHEBI:74411"/>
        <dbReference type="ChEBI" id="CHEBI:74497"/>
        <dbReference type="EC" id="2.1.1.192"/>
    </reaction>
</comment>
<comment type="cofactor">
    <cofactor evidence="1">
        <name>[4Fe-4S] cluster</name>
        <dbReference type="ChEBI" id="CHEBI:49883"/>
    </cofactor>
    <text evidence="1">Binds 1 [4Fe-4S] cluster. The cluster is coordinated with 3 cysteines and an exchangeable S-adenosyl-L-methionine.</text>
</comment>
<comment type="subcellular location">
    <subcellularLocation>
        <location evidence="1">Cytoplasm</location>
    </subcellularLocation>
</comment>
<comment type="miscellaneous">
    <text evidence="1">Reaction proceeds by a ping-pong mechanism involving intermediate methylation of a conserved cysteine residue.</text>
</comment>
<comment type="similarity">
    <text evidence="1">Belongs to the radical SAM superfamily. RlmN family.</text>
</comment>